<organism>
    <name type="scientific">Staphylothermus marinus (strain ATCC 43588 / DSM 3639 / JCM 9404 / F1)</name>
    <dbReference type="NCBI Taxonomy" id="399550"/>
    <lineage>
        <taxon>Archaea</taxon>
        <taxon>Thermoproteota</taxon>
        <taxon>Thermoprotei</taxon>
        <taxon>Desulfurococcales</taxon>
        <taxon>Desulfurococcaceae</taxon>
        <taxon>Staphylothermus</taxon>
    </lineage>
</organism>
<reference key="1">
    <citation type="journal article" date="2009" name="BMC Genomics">
        <title>The complete genome sequence of Staphylothermus marinus reveals differences in sulfur metabolism among heterotrophic Crenarchaeota.</title>
        <authorList>
            <person name="Anderson I.J."/>
            <person name="Dharmarajan L."/>
            <person name="Rodriguez J."/>
            <person name="Hooper S."/>
            <person name="Porat I."/>
            <person name="Ulrich L.E."/>
            <person name="Elkins J.G."/>
            <person name="Mavromatis K."/>
            <person name="Sun H."/>
            <person name="Land M."/>
            <person name="Lapidus A."/>
            <person name="Lucas S."/>
            <person name="Barry K."/>
            <person name="Huber H."/>
            <person name="Zhulin I.B."/>
            <person name="Whitman W.B."/>
            <person name="Mukhopadhyay B."/>
            <person name="Woese C."/>
            <person name="Bristow J."/>
            <person name="Kyrpides N."/>
        </authorList>
    </citation>
    <scope>NUCLEOTIDE SEQUENCE [LARGE SCALE GENOMIC DNA]</scope>
    <source>
        <strain>ATCC 43588 / DSM 3639 / JCM 9404 / F1</strain>
    </source>
</reference>
<reference key="2">
    <citation type="journal article" date="2009" name="Stand. Genomic Sci.">
        <title>Complete genome sequence of Staphylothermus marinus Stetter and Fiala 1986 type strain F1.</title>
        <authorList>
            <person name="Anderson I.J."/>
            <person name="Sun H."/>
            <person name="Lapidus A."/>
            <person name="Copeland A."/>
            <person name="Glavina Del Rio T."/>
            <person name="Tice H."/>
            <person name="Dalin E."/>
            <person name="Lucas S."/>
            <person name="Barry K."/>
            <person name="Land M."/>
            <person name="Richardson P."/>
            <person name="Huber H."/>
            <person name="Kyrpides N.C."/>
        </authorList>
    </citation>
    <scope>NUCLEOTIDE SEQUENCE [LARGE SCALE GENOMIC DNA]</scope>
    <source>
        <strain>ATCC 43588 / DSM 3639 / JCM 9404 / F1</strain>
    </source>
</reference>
<proteinExistence type="inferred from homology"/>
<feature type="chain" id="PRO_1000006931" description="Large ribosomal subunit protein eL34">
    <location>
        <begin position="1"/>
        <end position="92"/>
    </location>
</feature>
<evidence type="ECO:0000255" key="1">
    <source>
        <dbReference type="HAMAP-Rule" id="MF_00349"/>
    </source>
</evidence>
<evidence type="ECO:0000305" key="2"/>
<comment type="similarity">
    <text evidence="1">Belongs to the eukaryotic ribosomal protein eL34 family.</text>
</comment>
<protein>
    <recommendedName>
        <fullName evidence="1">Large ribosomal subunit protein eL34</fullName>
    </recommendedName>
    <alternativeName>
        <fullName evidence="2">50S ribosomal protein L34e</fullName>
    </alternativeName>
</protein>
<gene>
    <name evidence="1" type="primary">rpl34e</name>
    <name type="ordered locus">Smar_1044</name>
</gene>
<dbReference type="EMBL" id="CP000575">
    <property type="protein sequence ID" value="ABN70142.1"/>
    <property type="molecule type" value="Genomic_DNA"/>
</dbReference>
<dbReference type="RefSeq" id="WP_011839333.1">
    <property type="nucleotide sequence ID" value="NC_009033.1"/>
</dbReference>
<dbReference type="SMR" id="A3DND2"/>
<dbReference type="STRING" id="399550.Smar_1044"/>
<dbReference type="GeneID" id="4908059"/>
<dbReference type="KEGG" id="smr:Smar_1044"/>
<dbReference type="eggNOG" id="arCOG04168">
    <property type="taxonomic scope" value="Archaea"/>
</dbReference>
<dbReference type="HOGENOM" id="CLU_118652_2_0_2"/>
<dbReference type="OrthoDB" id="43096at2157"/>
<dbReference type="Proteomes" id="UP000000254">
    <property type="component" value="Chromosome"/>
</dbReference>
<dbReference type="GO" id="GO:1990904">
    <property type="term" value="C:ribonucleoprotein complex"/>
    <property type="evidence" value="ECO:0007669"/>
    <property type="project" value="UniProtKB-KW"/>
</dbReference>
<dbReference type="GO" id="GO:0005840">
    <property type="term" value="C:ribosome"/>
    <property type="evidence" value="ECO:0007669"/>
    <property type="project" value="UniProtKB-KW"/>
</dbReference>
<dbReference type="GO" id="GO:0003735">
    <property type="term" value="F:structural constituent of ribosome"/>
    <property type="evidence" value="ECO:0007669"/>
    <property type="project" value="InterPro"/>
</dbReference>
<dbReference type="GO" id="GO:0006412">
    <property type="term" value="P:translation"/>
    <property type="evidence" value="ECO:0007669"/>
    <property type="project" value="UniProtKB-UniRule"/>
</dbReference>
<dbReference type="Gene3D" id="6.20.340.10">
    <property type="match status" value="1"/>
</dbReference>
<dbReference type="HAMAP" id="MF_00349">
    <property type="entry name" value="Ribosomal_eL34"/>
    <property type="match status" value="1"/>
</dbReference>
<dbReference type="InterPro" id="IPR008195">
    <property type="entry name" value="Ribosomal_eL34"/>
</dbReference>
<dbReference type="InterPro" id="IPR038562">
    <property type="entry name" value="Ribosomal_eL34_C_sf"/>
</dbReference>
<dbReference type="InterPro" id="IPR018065">
    <property type="entry name" value="Ribosomal_eL34_CS"/>
</dbReference>
<dbReference type="InterPro" id="IPR047868">
    <property type="entry name" value="Ribosomal_L34e_arc-type"/>
</dbReference>
<dbReference type="NCBIfam" id="NF003143">
    <property type="entry name" value="PRK04059.1"/>
    <property type="match status" value="1"/>
</dbReference>
<dbReference type="PANTHER" id="PTHR10759">
    <property type="entry name" value="60S RIBOSOMAL PROTEIN L34"/>
    <property type="match status" value="1"/>
</dbReference>
<dbReference type="Pfam" id="PF01199">
    <property type="entry name" value="Ribosomal_L34e"/>
    <property type="match status" value="1"/>
</dbReference>
<dbReference type="PRINTS" id="PR01250">
    <property type="entry name" value="RIBOSOMALL34"/>
</dbReference>
<dbReference type="PROSITE" id="PS01145">
    <property type="entry name" value="RIBOSOMAL_L34E"/>
    <property type="match status" value="1"/>
</dbReference>
<sequence length="92" mass="10377">MPRPGLKTRSKRRVYVRTPGGKVVIHYEPRKPGPARCAICGKPLNGVPRLIPSKLRKLAKTEKRPERPYGGYICPRCLSRLLRESIRASISS</sequence>
<keyword id="KW-1185">Reference proteome</keyword>
<keyword id="KW-0687">Ribonucleoprotein</keyword>
<keyword id="KW-0689">Ribosomal protein</keyword>
<accession>A3DND2</accession>
<name>RL34_STAMF</name>